<keyword id="KW-1003">Cell membrane</keyword>
<keyword id="KW-0963">Cytoplasm</keyword>
<keyword id="KW-0472">Membrane</keyword>
<keyword id="KW-0597">Phosphoprotein</keyword>
<keyword id="KW-1185">Reference proteome</keyword>
<keyword id="KW-0677">Repeat</keyword>
<keyword id="KW-0802">TPR repeat</keyword>
<sequence>MATRKAGSRLETEIERCRSECQWERIPELVKQLSAKLIANDDMAELLLGESKLEQHLKEKPLRQGASPRGPRPQLTEVRKHLTAALDRGNLKSEFLQESNLVMAKLTYVEGDYKEALNIYARVGLDDLPLTAVPPYRLRMIAEAYATKGLCLEKLPVSSSTSNLHVDREQDVITCYEKAGDIALLYLQEIERVMLTNIQNRSPKPGPAPHDQELGFFLETGLQRAHVLYFKNGNLTRGVGRFRELLRAVETRTTQNLRMTIARQLAEILLRGMCEQSYWSPLEEPPYQSPLDDPLRKGANTKAYTLPRRARVYSGENIFCPQENTEEALLLLLISESMANRDAVLSRIPEHKSDRLISLQSASVVYDLLTIALGRRGQYEMLSECLERAMKFAFEEFHLWYQFALSLMAAGKSARAVKVLKECIRLKPDDATIPLLAAKLCVGSLHWLEEAEKFAKTVVDVGEKTSEFKAKGYLALGLTYSLQATDASLRGMQEGLQRKALLAFQRAHSLSPTDHQAAFYLALQLAISRQIPEALGYVRQALQLQGDDANSLHLLALLLSAQKHYHDALNIIDMALSEYPENFILLFSKVKLESLCRGPDEALLTCKHMLQIWKSCYNLTNPSDSGRGSSLLDRTIADRRQLNTITLPDFSDPETGSVHATSVAASRVEQALSEVASSLQSSAPKQGPLHPWMTLAQIWLHAAEVYIGIGKPAEATACTQEAANLFPMSHNVLYMRGQVAELRGHFDEARRWYEEALSISPTHVKSMQRLALVLHQLGRYSLAEKILRDAVQVNSTAHEVWNGLGEVLQAQGNDAAATECFLTALELEASSPAVPFTVIPRVL</sequence>
<comment type="function">
    <text evidence="1">Component of a complex required to localize phosphatidylinositol 4-kinase (PI4K) to the plasma membrane. The complex acts as a regulator of phosphatidylinositol 4-phosphate (PtdIns(4)P) synthesis. In the complex, plays a central role in bridging PI4KA to EFR3B and HYCC1, via direct interactions.</text>
</comment>
<comment type="subunit">
    <text evidence="1">Component of a phosphatidylinositol 4-kinase (PI4K) complex, composed of PI4KA, EFR3 (EFR3A or EFR3B), TTC7 (TTC7A or TTC7B) and HYCC (HYCC1 or HYCC2). Interacts with PI4KA, interaction is direct. Interacts with EFR3 (EFR3A or EFR3B), interaction is direct. Interacts with HYCC (HYCC1 or HYCC2), interaction is direct. Association with the PI4K complex is strongly reduced by TMEM150A.</text>
</comment>
<comment type="subcellular location">
    <subcellularLocation>
        <location evidence="1">Cytoplasm</location>
        <location evidence="1">Cytosol</location>
    </subcellularLocation>
    <subcellularLocation>
        <location evidence="1">Cell membrane</location>
    </subcellularLocation>
    <text evidence="1">Localizes to the cytosol and is recruited to the plasma membrane following interaction with EFR3 (EFR3A or EFR3B).</text>
</comment>
<organism>
    <name type="scientific">Mus musculus</name>
    <name type="common">Mouse</name>
    <dbReference type="NCBI Taxonomy" id="10090"/>
    <lineage>
        <taxon>Eukaryota</taxon>
        <taxon>Metazoa</taxon>
        <taxon>Chordata</taxon>
        <taxon>Craniata</taxon>
        <taxon>Vertebrata</taxon>
        <taxon>Euteleostomi</taxon>
        <taxon>Mammalia</taxon>
        <taxon>Eutheria</taxon>
        <taxon>Euarchontoglires</taxon>
        <taxon>Glires</taxon>
        <taxon>Rodentia</taxon>
        <taxon>Myomorpha</taxon>
        <taxon>Muroidea</taxon>
        <taxon>Muridae</taxon>
        <taxon>Murinae</taxon>
        <taxon>Mus</taxon>
        <taxon>Mus</taxon>
    </lineage>
</organism>
<name>TTC7B_MOUSE</name>
<protein>
    <recommendedName>
        <fullName>Tetratricopeptide repeat protein 7B</fullName>
        <shortName>TPR repeat protein 7B</shortName>
    </recommendedName>
</protein>
<feature type="chain" id="PRO_0000435631" description="Tetratricopeptide repeat protein 7B">
    <location>
        <begin position="1"/>
        <end position="843"/>
    </location>
</feature>
<feature type="repeat" description="TPR 1" evidence="2">
    <location>
        <begin position="97"/>
        <end position="131"/>
    </location>
</feature>
<feature type="repeat" description="TPR 2" evidence="2">
    <location>
        <begin position="219"/>
        <end position="252"/>
    </location>
</feature>
<feature type="repeat" description="TPR 3" evidence="2">
    <location>
        <begin position="363"/>
        <end position="396"/>
    </location>
</feature>
<feature type="repeat" description="TPR 4" evidence="2">
    <location>
        <begin position="397"/>
        <end position="430"/>
    </location>
</feature>
<feature type="repeat" description="TPR 5" evidence="2">
    <location>
        <begin position="479"/>
        <end position="514"/>
    </location>
</feature>
<feature type="repeat" description="TPR 6" evidence="2">
    <location>
        <begin position="516"/>
        <end position="548"/>
    </location>
</feature>
<feature type="repeat" description="TPR 7" evidence="2">
    <location>
        <begin position="549"/>
        <end position="582"/>
    </location>
</feature>
<feature type="repeat" description="TPR 8" evidence="2">
    <location>
        <begin position="696"/>
        <end position="729"/>
    </location>
</feature>
<feature type="repeat" description="TPR 9" evidence="2">
    <location>
        <begin position="730"/>
        <end position="763"/>
    </location>
</feature>
<feature type="repeat" description="TPR 10" evidence="2">
    <location>
        <begin position="765"/>
        <end position="797"/>
    </location>
</feature>
<feature type="repeat" description="TPR 11" evidence="2">
    <location>
        <begin position="798"/>
        <end position="831"/>
    </location>
</feature>
<feature type="modified residue" description="Phosphoserine" evidence="6">
    <location>
        <position position="160"/>
    </location>
</feature>
<feature type="modified residue" description="Phosphoserine" evidence="5 6">
    <location>
        <position position="202"/>
    </location>
</feature>
<feature type="modified residue" description="Phosphoserine" evidence="6">
    <location>
        <position position="625"/>
    </location>
</feature>
<feature type="modified residue" description="Phosphoserine" evidence="6">
    <location>
        <position position="629"/>
    </location>
</feature>
<feature type="modified residue" description="Phosphoserine" evidence="6">
    <location>
        <position position="630"/>
    </location>
</feature>
<feature type="modified residue" description="Phosphoserine" evidence="6">
    <location>
        <position position="673"/>
    </location>
</feature>
<feature type="modified residue" description="Phosphoserine" evidence="4 6">
    <location>
        <position position="677"/>
    </location>
</feature>
<feature type="modified residue" description="Phosphoserine" evidence="4 6">
    <location>
        <position position="678"/>
    </location>
</feature>
<feature type="modified residue" description="Phosphoserine" evidence="6">
    <location>
        <position position="681"/>
    </location>
</feature>
<accession>E9Q6P5</accession>
<dbReference type="EMBL" id="AC123705">
    <property type="status" value="NOT_ANNOTATED_CDS"/>
    <property type="molecule type" value="Genomic_DNA"/>
</dbReference>
<dbReference type="EMBL" id="AC159633">
    <property type="status" value="NOT_ANNOTATED_CDS"/>
    <property type="molecule type" value="Genomic_DNA"/>
</dbReference>
<dbReference type="EMBL" id="AC160340">
    <property type="status" value="NOT_ANNOTATED_CDS"/>
    <property type="molecule type" value="Genomic_DNA"/>
</dbReference>
<dbReference type="CCDS" id="CCDS49141.1"/>
<dbReference type="RefSeq" id="NP_001028385.1">
    <property type="nucleotide sequence ID" value="NM_001033213.2"/>
</dbReference>
<dbReference type="SMR" id="E9Q6P5"/>
<dbReference type="FunCoup" id="E9Q6P5">
    <property type="interactions" value="995"/>
</dbReference>
<dbReference type="IntAct" id="E9Q6P5">
    <property type="interactions" value="1"/>
</dbReference>
<dbReference type="MINT" id="E9Q6P5"/>
<dbReference type="STRING" id="10090.ENSMUSP00000052107"/>
<dbReference type="iPTMnet" id="E9Q6P5"/>
<dbReference type="PhosphoSitePlus" id="E9Q6P5"/>
<dbReference type="SwissPalm" id="E9Q6P5"/>
<dbReference type="jPOST" id="E9Q6P5"/>
<dbReference type="PaxDb" id="10090-ENSMUSP00000052107"/>
<dbReference type="PeptideAtlas" id="E9Q6P5"/>
<dbReference type="ProteomicsDB" id="300157"/>
<dbReference type="Pumba" id="E9Q6P5"/>
<dbReference type="Antibodypedia" id="26548">
    <property type="antibodies" value="28 antibodies from 14 providers"/>
</dbReference>
<dbReference type="Ensembl" id="ENSMUST00000062957.8">
    <property type="protein sequence ID" value="ENSMUSP00000052107.7"/>
    <property type="gene ID" value="ENSMUSG00000033530.9"/>
</dbReference>
<dbReference type="GeneID" id="104718"/>
<dbReference type="KEGG" id="mmu:104718"/>
<dbReference type="UCSC" id="uc007oss.2">
    <property type="organism name" value="mouse"/>
</dbReference>
<dbReference type="AGR" id="MGI:2144724"/>
<dbReference type="CTD" id="145567"/>
<dbReference type="MGI" id="MGI:2144724">
    <property type="gene designation" value="Ttc7b"/>
</dbReference>
<dbReference type="VEuPathDB" id="HostDB:ENSMUSG00000033530"/>
<dbReference type="eggNOG" id="KOG4162">
    <property type="taxonomic scope" value="Eukaryota"/>
</dbReference>
<dbReference type="GeneTree" id="ENSGT00940000158474"/>
<dbReference type="HOGENOM" id="CLU_010512_1_0_1"/>
<dbReference type="InParanoid" id="E9Q6P5"/>
<dbReference type="OMA" id="EYYLACQ"/>
<dbReference type="PhylomeDB" id="E9Q6P5"/>
<dbReference type="TreeFam" id="TF313783"/>
<dbReference type="BioGRID-ORCS" id="104718">
    <property type="hits" value="1 hit in 78 CRISPR screens"/>
</dbReference>
<dbReference type="CD-CODE" id="CE726F99">
    <property type="entry name" value="Postsynaptic density"/>
</dbReference>
<dbReference type="ChiTaRS" id="Ttc7b">
    <property type="organism name" value="mouse"/>
</dbReference>
<dbReference type="PRO" id="PR:E9Q6P5"/>
<dbReference type="Proteomes" id="UP000000589">
    <property type="component" value="Chromosome 12"/>
</dbReference>
<dbReference type="RNAct" id="E9Q6P5">
    <property type="molecule type" value="protein"/>
</dbReference>
<dbReference type="Bgee" id="ENSMUSG00000033530">
    <property type="expression patterns" value="Expressed in subiculum and 239 other cell types or tissues"/>
</dbReference>
<dbReference type="ExpressionAtlas" id="E9Q6P5">
    <property type="expression patterns" value="baseline and differential"/>
</dbReference>
<dbReference type="GO" id="GO:0005829">
    <property type="term" value="C:cytosol"/>
    <property type="evidence" value="ECO:0000250"/>
    <property type="project" value="UniProtKB"/>
</dbReference>
<dbReference type="GO" id="GO:0005886">
    <property type="term" value="C:plasma membrane"/>
    <property type="evidence" value="ECO:0000250"/>
    <property type="project" value="UniProtKB"/>
</dbReference>
<dbReference type="GO" id="GO:0046854">
    <property type="term" value="P:phosphatidylinositol phosphate biosynthetic process"/>
    <property type="evidence" value="ECO:0000250"/>
    <property type="project" value="UniProtKB"/>
</dbReference>
<dbReference type="GO" id="GO:0072659">
    <property type="term" value="P:protein localization to plasma membrane"/>
    <property type="evidence" value="ECO:0000250"/>
    <property type="project" value="UniProtKB"/>
</dbReference>
<dbReference type="FunFam" id="1.25.40.10:FF:000030">
    <property type="entry name" value="Tetratricopeptide repeat domain 7B"/>
    <property type="match status" value="1"/>
</dbReference>
<dbReference type="FunFam" id="1.25.40.10:FF:000035">
    <property type="entry name" value="Tetratricopeptide repeat domain 7B"/>
    <property type="match status" value="1"/>
</dbReference>
<dbReference type="Gene3D" id="1.25.40.10">
    <property type="entry name" value="Tetratricopeptide repeat domain"/>
    <property type="match status" value="2"/>
</dbReference>
<dbReference type="InterPro" id="IPR051722">
    <property type="entry name" value="Endocytosis_PI4K-reg_protein"/>
</dbReference>
<dbReference type="InterPro" id="IPR011990">
    <property type="entry name" value="TPR-like_helical_dom_sf"/>
</dbReference>
<dbReference type="InterPro" id="IPR013105">
    <property type="entry name" value="TPR_2"/>
</dbReference>
<dbReference type="InterPro" id="IPR019734">
    <property type="entry name" value="TPR_rpt"/>
</dbReference>
<dbReference type="InterPro" id="IPR045819">
    <property type="entry name" value="TTC7_N"/>
</dbReference>
<dbReference type="PANTHER" id="PTHR23083:SF365">
    <property type="entry name" value="TETRATRICOPEPTIDE REPEAT PROTEIN 7B"/>
    <property type="match status" value="1"/>
</dbReference>
<dbReference type="PANTHER" id="PTHR23083">
    <property type="entry name" value="TETRATRICOPEPTIDE REPEAT PROTEIN, TPR"/>
    <property type="match status" value="1"/>
</dbReference>
<dbReference type="Pfam" id="PF12895">
    <property type="entry name" value="ANAPC3"/>
    <property type="match status" value="1"/>
</dbReference>
<dbReference type="Pfam" id="PF13432">
    <property type="entry name" value="TPR_16"/>
    <property type="match status" value="1"/>
</dbReference>
<dbReference type="Pfam" id="PF07719">
    <property type="entry name" value="TPR_2"/>
    <property type="match status" value="1"/>
</dbReference>
<dbReference type="Pfam" id="PF13181">
    <property type="entry name" value="TPR_8"/>
    <property type="match status" value="1"/>
</dbReference>
<dbReference type="Pfam" id="PF19440">
    <property type="entry name" value="TTC7_N"/>
    <property type="match status" value="1"/>
</dbReference>
<dbReference type="SMART" id="SM00028">
    <property type="entry name" value="TPR"/>
    <property type="match status" value="8"/>
</dbReference>
<dbReference type="SUPFAM" id="SSF48452">
    <property type="entry name" value="TPR-like"/>
    <property type="match status" value="3"/>
</dbReference>
<dbReference type="PROSITE" id="PS50005">
    <property type="entry name" value="TPR"/>
    <property type="match status" value="8"/>
</dbReference>
<dbReference type="PROSITE" id="PS50293">
    <property type="entry name" value="TPR_REGION"/>
    <property type="match status" value="2"/>
</dbReference>
<proteinExistence type="evidence at protein level"/>
<reference key="1">
    <citation type="journal article" date="2009" name="PLoS Biol.">
        <title>Lineage-specific biology revealed by a finished genome assembly of the mouse.</title>
        <authorList>
            <person name="Church D.M."/>
            <person name="Goodstadt L."/>
            <person name="Hillier L.W."/>
            <person name="Zody M.C."/>
            <person name="Goldstein S."/>
            <person name="She X."/>
            <person name="Bult C.J."/>
            <person name="Agarwala R."/>
            <person name="Cherry J.L."/>
            <person name="DiCuccio M."/>
            <person name="Hlavina W."/>
            <person name="Kapustin Y."/>
            <person name="Meric P."/>
            <person name="Maglott D."/>
            <person name="Birtle Z."/>
            <person name="Marques A.C."/>
            <person name="Graves T."/>
            <person name="Zhou S."/>
            <person name="Teague B."/>
            <person name="Potamousis K."/>
            <person name="Churas C."/>
            <person name="Place M."/>
            <person name="Herschleb J."/>
            <person name="Runnheim R."/>
            <person name="Forrest D."/>
            <person name="Amos-Landgraf J."/>
            <person name="Schwartz D.C."/>
            <person name="Cheng Z."/>
            <person name="Lindblad-Toh K."/>
            <person name="Eichler E.E."/>
            <person name="Ponting C.P."/>
        </authorList>
    </citation>
    <scope>NUCLEOTIDE SEQUENCE [LARGE SCALE GENOMIC DNA]</scope>
    <source>
        <strain>C57BL/6J</strain>
    </source>
</reference>
<reference key="2">
    <citation type="journal article" date="2007" name="Proc. Natl. Acad. Sci. U.S.A.">
        <title>Large-scale phosphorylation analysis of mouse liver.</title>
        <authorList>
            <person name="Villen J."/>
            <person name="Beausoleil S.A."/>
            <person name="Gerber S.A."/>
            <person name="Gygi S.P."/>
        </authorList>
    </citation>
    <scope>PHOSPHORYLATION [LARGE SCALE ANALYSIS] AT SER-677 AND SER-678</scope>
    <scope>IDENTIFICATION BY MASS SPECTROMETRY [LARGE SCALE ANALYSIS]</scope>
    <source>
        <tissue>Liver</tissue>
    </source>
</reference>
<reference key="3">
    <citation type="journal article" date="2009" name="Immunity">
        <title>The phagosomal proteome in interferon-gamma-activated macrophages.</title>
        <authorList>
            <person name="Trost M."/>
            <person name="English L."/>
            <person name="Lemieux S."/>
            <person name="Courcelles M."/>
            <person name="Desjardins M."/>
            <person name="Thibault P."/>
        </authorList>
    </citation>
    <scope>PHOSPHORYLATION [LARGE SCALE ANALYSIS] AT SER-202</scope>
    <scope>IDENTIFICATION BY MASS SPECTROMETRY [LARGE SCALE ANALYSIS]</scope>
</reference>
<reference key="4">
    <citation type="journal article" date="2010" name="Cell">
        <title>A tissue-specific atlas of mouse protein phosphorylation and expression.</title>
        <authorList>
            <person name="Huttlin E.L."/>
            <person name="Jedrychowski M.P."/>
            <person name="Elias J.E."/>
            <person name="Goswami T."/>
            <person name="Rad R."/>
            <person name="Beausoleil S.A."/>
            <person name="Villen J."/>
            <person name="Haas W."/>
            <person name="Sowa M.E."/>
            <person name="Gygi S.P."/>
        </authorList>
    </citation>
    <scope>PHOSPHORYLATION [LARGE SCALE ANALYSIS] AT SER-160; SER-202; SER-625; SER-629; SER-630; SER-673; SER-677; SER-678 AND SER-681</scope>
    <scope>IDENTIFICATION BY MASS SPECTROMETRY [LARGE SCALE ANALYSIS]</scope>
    <source>
        <tissue>Brain</tissue>
        <tissue>Brown adipose tissue</tissue>
        <tissue>Heart</tissue>
        <tissue>Kidney</tissue>
        <tissue>Liver</tissue>
        <tissue>Lung</tissue>
        <tissue>Pancreas</tissue>
        <tissue>Spleen</tissue>
        <tissue>Testis</tissue>
    </source>
</reference>
<evidence type="ECO:0000250" key="1">
    <source>
        <dbReference type="UniProtKB" id="Q86TV6"/>
    </source>
</evidence>
<evidence type="ECO:0000255" key="2"/>
<evidence type="ECO:0000312" key="3">
    <source>
        <dbReference type="MGI" id="MGI:2144724"/>
    </source>
</evidence>
<evidence type="ECO:0007744" key="4">
    <source>
    </source>
</evidence>
<evidence type="ECO:0007744" key="5">
    <source>
    </source>
</evidence>
<evidence type="ECO:0007744" key="6">
    <source>
    </source>
</evidence>
<gene>
    <name evidence="3" type="primary">Ttc7b</name>
</gene>